<accession>B2RIV3</accession>
<accession>Q9ZNF8</accession>
<organism>
    <name type="scientific">Porphyromonas gingivalis (strain ATCC 33277 / DSM 20709 / CIP 103683 / JCM 12257 / NCTC 11834 / 2561)</name>
    <dbReference type="NCBI Taxonomy" id="431947"/>
    <lineage>
        <taxon>Bacteria</taxon>
        <taxon>Pseudomonadati</taxon>
        <taxon>Bacteroidota</taxon>
        <taxon>Bacteroidia</taxon>
        <taxon>Bacteroidales</taxon>
        <taxon>Porphyromonadaceae</taxon>
        <taxon>Porphyromonas</taxon>
    </lineage>
</organism>
<sequence length="216" mass="24371">MEVIHLGAEHSLLNRFVMEMRDVTIQNDRLRFRRNIERVGEVMAYEISKKMTQQVRTVTTPLGEAECSVPQDKVVLATILRAGLPFHHGFLNYFDYCENAFVSAYRKYKDRLNFDIHIEYIASPDITDKVLIISDPMLATGSSMELAYKALLTKGNPKHIHIASIIASQQAVDYIRGVMPDNTTIWIAAIDPTIDEHSYIVPGLGDAGDLAYGEKL</sequence>
<evidence type="ECO:0000250" key="1"/>
<evidence type="ECO:0000305" key="2"/>
<proteinExistence type="inferred from homology"/>
<protein>
    <recommendedName>
        <fullName>Uracil phosphoribosyltransferase</fullName>
        <ecNumber>2.4.2.9</ecNumber>
    </recommendedName>
    <alternativeName>
        <fullName>UMP pyrophosphorylase</fullName>
    </alternativeName>
    <alternativeName>
        <fullName>UPRTase</fullName>
    </alternativeName>
</protein>
<dbReference type="EC" id="2.4.2.9"/>
<dbReference type="EMBL" id="AB016085">
    <property type="protein sequence ID" value="BAA36601.1"/>
    <property type="molecule type" value="Genomic_DNA"/>
</dbReference>
<dbReference type="EMBL" id="AP009380">
    <property type="protein sequence ID" value="BAG33298.1"/>
    <property type="molecule type" value="Genomic_DNA"/>
</dbReference>
<dbReference type="RefSeq" id="WP_004585294.1">
    <property type="nucleotide sequence ID" value="NZ_CP025930.1"/>
</dbReference>
<dbReference type="SMR" id="B2RIV3"/>
<dbReference type="GeneID" id="29255998"/>
<dbReference type="KEGG" id="pgn:PGN_0779"/>
<dbReference type="eggNOG" id="COG0035">
    <property type="taxonomic scope" value="Bacteria"/>
</dbReference>
<dbReference type="HOGENOM" id="CLU_067096_2_0_10"/>
<dbReference type="OrthoDB" id="9781675at2"/>
<dbReference type="BioCyc" id="PGIN431947:G1G2V-854-MONOMER"/>
<dbReference type="UniPathway" id="UPA00574">
    <property type="reaction ID" value="UER00636"/>
</dbReference>
<dbReference type="Proteomes" id="UP000008842">
    <property type="component" value="Chromosome"/>
</dbReference>
<dbReference type="GO" id="GO:0005525">
    <property type="term" value="F:GTP binding"/>
    <property type="evidence" value="ECO:0007669"/>
    <property type="project" value="UniProtKB-KW"/>
</dbReference>
<dbReference type="GO" id="GO:0004845">
    <property type="term" value="F:uracil phosphoribosyltransferase activity"/>
    <property type="evidence" value="ECO:0007669"/>
    <property type="project" value="UniProtKB-EC"/>
</dbReference>
<dbReference type="GO" id="GO:0044206">
    <property type="term" value="P:UMP salvage"/>
    <property type="evidence" value="ECO:0007669"/>
    <property type="project" value="UniProtKB-UniPathway"/>
</dbReference>
<dbReference type="CDD" id="cd06223">
    <property type="entry name" value="PRTases_typeI"/>
    <property type="match status" value="1"/>
</dbReference>
<dbReference type="FunFam" id="3.40.50.2020:FF:000023">
    <property type="entry name" value="Probable uracil phosphoribosyltransferase"/>
    <property type="match status" value="1"/>
</dbReference>
<dbReference type="Gene3D" id="3.40.50.2020">
    <property type="match status" value="1"/>
</dbReference>
<dbReference type="InterPro" id="IPR000836">
    <property type="entry name" value="PRibTrfase_dom"/>
</dbReference>
<dbReference type="InterPro" id="IPR029057">
    <property type="entry name" value="PRTase-like"/>
</dbReference>
<dbReference type="NCBIfam" id="NF001097">
    <property type="entry name" value="PRK00129.1"/>
    <property type="match status" value="1"/>
</dbReference>
<dbReference type="PANTHER" id="PTHR43363">
    <property type="entry name" value="HYPOXANTHINE PHOSPHORIBOSYLTRANSFERASE"/>
    <property type="match status" value="1"/>
</dbReference>
<dbReference type="PANTHER" id="PTHR43363:SF1">
    <property type="entry name" value="HYPOXANTHINE-GUANINE PHOSPHORIBOSYLTRANSFERASE"/>
    <property type="match status" value="1"/>
</dbReference>
<dbReference type="Pfam" id="PF14681">
    <property type="entry name" value="UPRTase"/>
    <property type="match status" value="1"/>
</dbReference>
<dbReference type="SUPFAM" id="SSF53271">
    <property type="entry name" value="PRTase-like"/>
    <property type="match status" value="1"/>
</dbReference>
<feature type="chain" id="PRO_0000370695" description="Uracil phosphoribosyltransferase">
    <location>
        <begin position="1"/>
        <end position="216"/>
    </location>
</feature>
<feature type="binding site" evidence="1">
    <location>
        <position position="81"/>
    </location>
    <ligand>
        <name>5-phospho-alpha-D-ribose 1-diphosphate</name>
        <dbReference type="ChEBI" id="CHEBI:58017"/>
    </ligand>
</feature>
<feature type="binding site" evidence="1">
    <location>
        <position position="106"/>
    </location>
    <ligand>
        <name>5-phospho-alpha-D-ribose 1-diphosphate</name>
        <dbReference type="ChEBI" id="CHEBI:58017"/>
    </ligand>
</feature>
<feature type="binding site" evidence="1">
    <location>
        <begin position="135"/>
        <end position="143"/>
    </location>
    <ligand>
        <name>5-phospho-alpha-D-ribose 1-diphosphate</name>
        <dbReference type="ChEBI" id="CHEBI:58017"/>
    </ligand>
</feature>
<feature type="binding site" evidence="1">
    <location>
        <position position="200"/>
    </location>
    <ligand>
        <name>uracil</name>
        <dbReference type="ChEBI" id="CHEBI:17568"/>
    </ligand>
</feature>
<feature type="binding site" evidence="1">
    <location>
        <begin position="205"/>
        <end position="207"/>
    </location>
    <ligand>
        <name>uracil</name>
        <dbReference type="ChEBI" id="CHEBI:17568"/>
    </ligand>
</feature>
<feature type="binding site" evidence="1">
    <location>
        <position position="206"/>
    </location>
    <ligand>
        <name>5-phospho-alpha-D-ribose 1-diphosphate</name>
        <dbReference type="ChEBI" id="CHEBI:58017"/>
    </ligand>
</feature>
<comment type="function">
    <text evidence="1">Catalyzes the conversion of uracil and 5-phospho-alpha-D-ribose 1-diphosphate (PRPP) to UMP and diphosphate.</text>
</comment>
<comment type="catalytic activity">
    <reaction>
        <text>UMP + diphosphate = 5-phospho-alpha-D-ribose 1-diphosphate + uracil</text>
        <dbReference type="Rhea" id="RHEA:13017"/>
        <dbReference type="ChEBI" id="CHEBI:17568"/>
        <dbReference type="ChEBI" id="CHEBI:33019"/>
        <dbReference type="ChEBI" id="CHEBI:57865"/>
        <dbReference type="ChEBI" id="CHEBI:58017"/>
        <dbReference type="EC" id="2.4.2.9"/>
    </reaction>
</comment>
<comment type="cofactor">
    <cofactor evidence="1">
        <name>Mg(2+)</name>
        <dbReference type="ChEBI" id="CHEBI:18420"/>
    </cofactor>
    <text evidence="1">Binds 1 Mg(2+) ion per subunit. The magnesium is bound as Mg-PRPP.</text>
</comment>
<comment type="activity regulation">
    <text evidence="1">Allosterically activated by GTP.</text>
</comment>
<comment type="pathway">
    <text>Pyrimidine metabolism; UMP biosynthesis via salvage pathway; UMP from uracil: step 1/1.</text>
</comment>
<comment type="similarity">
    <text evidence="2">Belongs to the UPRTase family.</text>
</comment>
<name>UPP_PORG3</name>
<keyword id="KW-0021">Allosteric enzyme</keyword>
<keyword id="KW-0328">Glycosyltransferase</keyword>
<keyword id="KW-0342">GTP-binding</keyword>
<keyword id="KW-0460">Magnesium</keyword>
<keyword id="KW-0547">Nucleotide-binding</keyword>
<keyword id="KW-0808">Transferase</keyword>
<gene>
    <name type="primary">upp</name>
    <name type="ordered locus">PGN_0779</name>
</gene>
<reference key="1">
    <citation type="submission" date="1998-07" db="EMBL/GenBank/DDBJ databases">
        <title>PorT, upp, and prtQ genes of Porphyromonas gingivalis.</title>
        <authorList>
            <person name="Nakayama K."/>
            <person name="Shi Y."/>
        </authorList>
    </citation>
    <scope>NUCLEOTIDE SEQUENCE [GENOMIC DNA]</scope>
</reference>
<reference key="2">
    <citation type="journal article" date="2008" name="DNA Res.">
        <title>Determination of the genome sequence of Porphyromonas gingivalis strain ATCC 33277 and genomic comparison with strain W83 revealed extensive genome rearrangements in P. gingivalis.</title>
        <authorList>
            <person name="Naito M."/>
            <person name="Hirakawa H."/>
            <person name="Yamashita A."/>
            <person name="Ohara N."/>
            <person name="Shoji M."/>
            <person name="Yukitake H."/>
            <person name="Nakayama K."/>
            <person name="Toh H."/>
            <person name="Yoshimura F."/>
            <person name="Kuhara S."/>
            <person name="Hattori M."/>
            <person name="Hayashi T."/>
            <person name="Nakayama K."/>
        </authorList>
    </citation>
    <scope>NUCLEOTIDE SEQUENCE [LARGE SCALE GENOMIC DNA]</scope>
    <source>
        <strain>ATCC 33277 / DSM 20709 / CIP 103683 / JCM 12257 / NCTC 11834 / 2561</strain>
    </source>
</reference>